<name>RL7_LIMRJ</name>
<keyword id="KW-0687">Ribonucleoprotein</keyword>
<keyword id="KW-0689">Ribosomal protein</keyword>
<sequence>MAFDKDAIIASLKEASISDLNDLVKAIEEEFDVSAAAPVAVAGAAGGDAAAKDSFTVELTEPGSAKVKVIKAVKDITGLGLKDAKDLVDGAPSAIKEDVKEDEANDIKEKLEAAGATVTLK</sequence>
<organism>
    <name type="scientific">Limosilactobacillus reuteri subsp. reuteri (strain JCM 1112)</name>
    <name type="common">Lactobacillus reuteri</name>
    <dbReference type="NCBI Taxonomy" id="557433"/>
    <lineage>
        <taxon>Bacteria</taxon>
        <taxon>Bacillati</taxon>
        <taxon>Bacillota</taxon>
        <taxon>Bacilli</taxon>
        <taxon>Lactobacillales</taxon>
        <taxon>Lactobacillaceae</taxon>
        <taxon>Limosilactobacillus</taxon>
    </lineage>
</organism>
<evidence type="ECO:0000255" key="1">
    <source>
        <dbReference type="HAMAP-Rule" id="MF_00368"/>
    </source>
</evidence>
<evidence type="ECO:0000305" key="2"/>
<feature type="chain" id="PRO_1000121454" description="Large ribosomal subunit protein bL12">
    <location>
        <begin position="1"/>
        <end position="121"/>
    </location>
</feature>
<protein>
    <recommendedName>
        <fullName evidence="1">Large ribosomal subunit protein bL12</fullName>
    </recommendedName>
    <alternativeName>
        <fullName evidence="2">50S ribosomal protein L7/L12</fullName>
    </alternativeName>
</protein>
<gene>
    <name evidence="1" type="primary">rplL</name>
    <name type="ordered locus">LAR_0303</name>
</gene>
<dbReference type="EMBL" id="AP007281">
    <property type="protein sequence ID" value="BAG24819.1"/>
    <property type="molecule type" value="Genomic_DNA"/>
</dbReference>
<dbReference type="RefSeq" id="WP_003666310.1">
    <property type="nucleotide sequence ID" value="NC_010609.1"/>
</dbReference>
<dbReference type="SMR" id="B2G5T7"/>
<dbReference type="GeneID" id="77190118"/>
<dbReference type="KEGG" id="lrf:LAR_0303"/>
<dbReference type="HOGENOM" id="CLU_086499_3_2_9"/>
<dbReference type="GO" id="GO:0022625">
    <property type="term" value="C:cytosolic large ribosomal subunit"/>
    <property type="evidence" value="ECO:0007669"/>
    <property type="project" value="TreeGrafter"/>
</dbReference>
<dbReference type="GO" id="GO:0003729">
    <property type="term" value="F:mRNA binding"/>
    <property type="evidence" value="ECO:0007669"/>
    <property type="project" value="TreeGrafter"/>
</dbReference>
<dbReference type="GO" id="GO:0003735">
    <property type="term" value="F:structural constituent of ribosome"/>
    <property type="evidence" value="ECO:0007669"/>
    <property type="project" value="InterPro"/>
</dbReference>
<dbReference type="GO" id="GO:0006412">
    <property type="term" value="P:translation"/>
    <property type="evidence" value="ECO:0007669"/>
    <property type="project" value="UniProtKB-UniRule"/>
</dbReference>
<dbReference type="CDD" id="cd00387">
    <property type="entry name" value="Ribosomal_L7_L12"/>
    <property type="match status" value="1"/>
</dbReference>
<dbReference type="FunFam" id="3.30.1390.10:FF:000001">
    <property type="entry name" value="50S ribosomal protein L7/L12"/>
    <property type="match status" value="1"/>
</dbReference>
<dbReference type="Gene3D" id="3.30.1390.10">
    <property type="match status" value="1"/>
</dbReference>
<dbReference type="Gene3D" id="1.20.5.710">
    <property type="entry name" value="Single helix bin"/>
    <property type="match status" value="1"/>
</dbReference>
<dbReference type="HAMAP" id="MF_00368">
    <property type="entry name" value="Ribosomal_bL12"/>
    <property type="match status" value="1"/>
</dbReference>
<dbReference type="InterPro" id="IPR000206">
    <property type="entry name" value="Ribosomal_bL12"/>
</dbReference>
<dbReference type="InterPro" id="IPR013823">
    <property type="entry name" value="Ribosomal_bL12_C"/>
</dbReference>
<dbReference type="InterPro" id="IPR014719">
    <property type="entry name" value="Ribosomal_bL12_C/ClpS-like"/>
</dbReference>
<dbReference type="InterPro" id="IPR008932">
    <property type="entry name" value="Ribosomal_bL12_oligo"/>
</dbReference>
<dbReference type="InterPro" id="IPR036235">
    <property type="entry name" value="Ribosomal_bL12_oligo_N_sf"/>
</dbReference>
<dbReference type="NCBIfam" id="TIGR00855">
    <property type="entry name" value="L12"/>
    <property type="match status" value="1"/>
</dbReference>
<dbReference type="PANTHER" id="PTHR45987">
    <property type="entry name" value="39S RIBOSOMAL PROTEIN L12"/>
    <property type="match status" value="1"/>
</dbReference>
<dbReference type="PANTHER" id="PTHR45987:SF4">
    <property type="entry name" value="LARGE RIBOSOMAL SUBUNIT PROTEIN BL12M"/>
    <property type="match status" value="1"/>
</dbReference>
<dbReference type="Pfam" id="PF00542">
    <property type="entry name" value="Ribosomal_L12"/>
    <property type="match status" value="1"/>
</dbReference>
<dbReference type="Pfam" id="PF16320">
    <property type="entry name" value="Ribosomal_L12_N"/>
    <property type="match status" value="1"/>
</dbReference>
<dbReference type="SUPFAM" id="SSF54736">
    <property type="entry name" value="ClpS-like"/>
    <property type="match status" value="1"/>
</dbReference>
<dbReference type="SUPFAM" id="SSF48300">
    <property type="entry name" value="Ribosomal protein L7/12, oligomerisation (N-terminal) domain"/>
    <property type="match status" value="1"/>
</dbReference>
<accession>B2G5T7</accession>
<comment type="function">
    <text evidence="1">Forms part of the ribosomal stalk which helps the ribosome interact with GTP-bound translation factors. Is thus essential for accurate translation.</text>
</comment>
<comment type="subunit">
    <text evidence="1">Homodimer. Part of the ribosomal stalk of the 50S ribosomal subunit. Forms a multimeric L10(L12)X complex, where L10 forms an elongated spine to which 2 to 4 L12 dimers bind in a sequential fashion. Binds GTP-bound translation factors.</text>
</comment>
<comment type="similarity">
    <text evidence="1">Belongs to the bacterial ribosomal protein bL12 family.</text>
</comment>
<proteinExistence type="inferred from homology"/>
<reference key="1">
    <citation type="journal article" date="2008" name="DNA Res.">
        <title>Comparative genome analysis of Lactobacillus reuteri and Lactobacillus fermentum reveal a genomic island for reuterin and cobalamin production.</title>
        <authorList>
            <person name="Morita H."/>
            <person name="Toh H."/>
            <person name="Fukuda S."/>
            <person name="Horikawa H."/>
            <person name="Oshima K."/>
            <person name="Suzuki T."/>
            <person name="Murakami M."/>
            <person name="Hisamatsu S."/>
            <person name="Kato Y."/>
            <person name="Takizawa T."/>
            <person name="Fukuoka H."/>
            <person name="Yoshimura T."/>
            <person name="Itoh K."/>
            <person name="O'Sullivan D.J."/>
            <person name="McKay L.L."/>
            <person name="Ohno H."/>
            <person name="Kikuchi J."/>
            <person name="Masaoka T."/>
            <person name="Hattori M."/>
        </authorList>
    </citation>
    <scope>NUCLEOTIDE SEQUENCE [LARGE SCALE GENOMIC DNA]</scope>
    <source>
        <strain>JCM 1112</strain>
    </source>
</reference>